<reference key="1">
    <citation type="journal article" date="2005" name="Genome Res.">
        <title>Genome sequence of Blochmannia pennsylvanicus indicates parallel evolutionary trends among bacterial mutualists of insects.</title>
        <authorList>
            <person name="Degnan P.H."/>
            <person name="Lazarus A.B."/>
            <person name="Wernegreen J.J."/>
        </authorList>
    </citation>
    <scope>NUCLEOTIDE SEQUENCE [LARGE SCALE GENOMIC DNA]</scope>
    <source>
        <strain>BPEN</strain>
    </source>
</reference>
<keyword id="KW-0963">Cytoplasm</keyword>
<keyword id="KW-0342">GTP-binding</keyword>
<keyword id="KW-0378">Hydrolase</keyword>
<keyword id="KW-0460">Magnesium</keyword>
<keyword id="KW-0479">Metal-binding</keyword>
<keyword id="KW-0547">Nucleotide-binding</keyword>
<keyword id="KW-0630">Potassium</keyword>
<keyword id="KW-1185">Reference proteome</keyword>
<keyword id="KW-0819">tRNA processing</keyword>
<proteinExistence type="inferred from homology"/>
<evidence type="ECO:0000255" key="1">
    <source>
        <dbReference type="HAMAP-Rule" id="MF_00379"/>
    </source>
</evidence>
<name>MNME_BLOPB</name>
<sequence length="470" mass="52560">MNYTIDTVVAISTPPGRGGIGIIRISGKSVPEIAPKLLGKIPNPRKAEYLPFLDTDGSILERVIALFFPEPNSFTGENILEIHGHGGQIILDILLERILKTSSDIRIAHPGEFTKRAFLNNKIDLVQAEAIADIIDATSYQAAKSASNSLQGIFSRKIYIILEQLTNLRMYAESSIDFSEDEISIIPYEDIKKKLRNIISDVQKMYKSTYHGVLLREGIKIVIAGKPNAGKSSLFNALVGIDRAIISTISGTTRDTLHEYIQLNGIAFHITDTAGLQKKSDNEIEQIGMKRTWEELSNADHILWVIDPNDVTNKENDITLKHVEKVLFCKNKKTPITIIHNKSDLTKNQIGISIINNYTIITLSALFNDGTDLLQEYLSNNIKSKIQQDCKSNLSENQGNFIARRRHLNALEKSSKYLFSAQTQLLSTMSINELFAEDLGLAHKELSKIFGKFTPDDLLKRIFSTFCIGK</sequence>
<accession>Q494C0</accession>
<dbReference type="EC" id="3.6.-.-" evidence="1"/>
<dbReference type="EMBL" id="CP000016">
    <property type="protein sequence ID" value="AAZ40661.1"/>
    <property type="molecule type" value="Genomic_DNA"/>
</dbReference>
<dbReference type="RefSeq" id="WP_011282567.1">
    <property type="nucleotide sequence ID" value="NC_007292.1"/>
</dbReference>
<dbReference type="SMR" id="Q494C0"/>
<dbReference type="STRING" id="291272.BPEN_011"/>
<dbReference type="KEGG" id="bpn:BPEN_011"/>
<dbReference type="eggNOG" id="COG0486">
    <property type="taxonomic scope" value="Bacteria"/>
</dbReference>
<dbReference type="HOGENOM" id="CLU_019624_4_1_6"/>
<dbReference type="OrthoDB" id="9805918at2"/>
<dbReference type="Proteomes" id="UP000007794">
    <property type="component" value="Chromosome"/>
</dbReference>
<dbReference type="GO" id="GO:0005829">
    <property type="term" value="C:cytosol"/>
    <property type="evidence" value="ECO:0007669"/>
    <property type="project" value="TreeGrafter"/>
</dbReference>
<dbReference type="GO" id="GO:0005525">
    <property type="term" value="F:GTP binding"/>
    <property type="evidence" value="ECO:0007669"/>
    <property type="project" value="UniProtKB-UniRule"/>
</dbReference>
<dbReference type="GO" id="GO:0003924">
    <property type="term" value="F:GTPase activity"/>
    <property type="evidence" value="ECO:0007669"/>
    <property type="project" value="UniProtKB-UniRule"/>
</dbReference>
<dbReference type="GO" id="GO:0046872">
    <property type="term" value="F:metal ion binding"/>
    <property type="evidence" value="ECO:0007669"/>
    <property type="project" value="UniProtKB-KW"/>
</dbReference>
<dbReference type="GO" id="GO:0030488">
    <property type="term" value="P:tRNA methylation"/>
    <property type="evidence" value="ECO:0007669"/>
    <property type="project" value="TreeGrafter"/>
</dbReference>
<dbReference type="GO" id="GO:0002098">
    <property type="term" value="P:tRNA wobble uridine modification"/>
    <property type="evidence" value="ECO:0007669"/>
    <property type="project" value="TreeGrafter"/>
</dbReference>
<dbReference type="CDD" id="cd04164">
    <property type="entry name" value="trmE"/>
    <property type="match status" value="1"/>
</dbReference>
<dbReference type="CDD" id="cd14858">
    <property type="entry name" value="TrmE_N"/>
    <property type="match status" value="1"/>
</dbReference>
<dbReference type="Gene3D" id="3.40.50.300">
    <property type="entry name" value="P-loop containing nucleotide triphosphate hydrolases"/>
    <property type="match status" value="1"/>
</dbReference>
<dbReference type="Gene3D" id="3.30.1360.120">
    <property type="entry name" value="Probable tRNA modification gtpase trme, domain 1"/>
    <property type="match status" value="1"/>
</dbReference>
<dbReference type="Gene3D" id="1.20.120.430">
    <property type="entry name" value="tRNA modification GTPase MnmE domain 2"/>
    <property type="match status" value="1"/>
</dbReference>
<dbReference type="HAMAP" id="MF_00379">
    <property type="entry name" value="GTPase_MnmE"/>
    <property type="match status" value="1"/>
</dbReference>
<dbReference type="InterPro" id="IPR031168">
    <property type="entry name" value="G_TrmE"/>
</dbReference>
<dbReference type="InterPro" id="IPR006073">
    <property type="entry name" value="GTP-bd"/>
</dbReference>
<dbReference type="InterPro" id="IPR018948">
    <property type="entry name" value="GTP-bd_TrmE_N"/>
</dbReference>
<dbReference type="InterPro" id="IPR004520">
    <property type="entry name" value="GTPase_MnmE"/>
</dbReference>
<dbReference type="InterPro" id="IPR027368">
    <property type="entry name" value="MnmE_dom2"/>
</dbReference>
<dbReference type="InterPro" id="IPR025867">
    <property type="entry name" value="MnmE_helical"/>
</dbReference>
<dbReference type="InterPro" id="IPR027417">
    <property type="entry name" value="P-loop_NTPase"/>
</dbReference>
<dbReference type="InterPro" id="IPR005225">
    <property type="entry name" value="Small_GTP-bd"/>
</dbReference>
<dbReference type="InterPro" id="IPR027266">
    <property type="entry name" value="TrmE/GcvT_dom1"/>
</dbReference>
<dbReference type="NCBIfam" id="TIGR00450">
    <property type="entry name" value="mnmE_trmE_thdF"/>
    <property type="match status" value="1"/>
</dbReference>
<dbReference type="NCBIfam" id="NF003661">
    <property type="entry name" value="PRK05291.1-3"/>
    <property type="match status" value="1"/>
</dbReference>
<dbReference type="NCBIfam" id="TIGR00231">
    <property type="entry name" value="small_GTP"/>
    <property type="match status" value="1"/>
</dbReference>
<dbReference type="PANTHER" id="PTHR42714">
    <property type="entry name" value="TRNA MODIFICATION GTPASE GTPBP3"/>
    <property type="match status" value="1"/>
</dbReference>
<dbReference type="PANTHER" id="PTHR42714:SF2">
    <property type="entry name" value="TRNA MODIFICATION GTPASE GTPBP3, MITOCHONDRIAL"/>
    <property type="match status" value="1"/>
</dbReference>
<dbReference type="Pfam" id="PF01926">
    <property type="entry name" value="MMR_HSR1"/>
    <property type="match status" value="1"/>
</dbReference>
<dbReference type="Pfam" id="PF12631">
    <property type="entry name" value="MnmE_helical"/>
    <property type="match status" value="1"/>
</dbReference>
<dbReference type="Pfam" id="PF10396">
    <property type="entry name" value="TrmE_N"/>
    <property type="match status" value="1"/>
</dbReference>
<dbReference type="PRINTS" id="PR00449">
    <property type="entry name" value="RASTRNSFRMNG"/>
</dbReference>
<dbReference type="SUPFAM" id="SSF52540">
    <property type="entry name" value="P-loop containing nucleoside triphosphate hydrolases"/>
    <property type="match status" value="1"/>
</dbReference>
<dbReference type="PROSITE" id="PS51709">
    <property type="entry name" value="G_TRME"/>
    <property type="match status" value="1"/>
</dbReference>
<feature type="chain" id="PRO_1000048805" description="tRNA modification GTPase MnmE">
    <location>
        <begin position="1"/>
        <end position="470"/>
    </location>
</feature>
<feature type="domain" description="TrmE-type G">
    <location>
        <begin position="218"/>
        <end position="383"/>
    </location>
</feature>
<feature type="binding site" evidence="1">
    <location>
        <position position="24"/>
    </location>
    <ligand>
        <name>(6S)-5-formyl-5,6,7,8-tetrahydrofolate</name>
        <dbReference type="ChEBI" id="CHEBI:57457"/>
    </ligand>
</feature>
<feature type="binding site" evidence="1">
    <location>
        <position position="81"/>
    </location>
    <ligand>
        <name>(6S)-5-formyl-5,6,7,8-tetrahydrofolate</name>
        <dbReference type="ChEBI" id="CHEBI:57457"/>
    </ligand>
</feature>
<feature type="binding site" evidence="1">
    <location>
        <position position="122"/>
    </location>
    <ligand>
        <name>(6S)-5-formyl-5,6,7,8-tetrahydrofolate</name>
        <dbReference type="ChEBI" id="CHEBI:57457"/>
    </ligand>
</feature>
<feature type="binding site" evidence="1">
    <location>
        <begin position="228"/>
        <end position="233"/>
    </location>
    <ligand>
        <name>GTP</name>
        <dbReference type="ChEBI" id="CHEBI:37565"/>
    </ligand>
</feature>
<feature type="binding site" evidence="1">
    <location>
        <position position="228"/>
    </location>
    <ligand>
        <name>K(+)</name>
        <dbReference type="ChEBI" id="CHEBI:29103"/>
    </ligand>
</feature>
<feature type="binding site" evidence="1">
    <location>
        <position position="232"/>
    </location>
    <ligand>
        <name>Mg(2+)</name>
        <dbReference type="ChEBI" id="CHEBI:18420"/>
    </ligand>
</feature>
<feature type="binding site" evidence="1">
    <location>
        <begin position="247"/>
        <end position="253"/>
    </location>
    <ligand>
        <name>GTP</name>
        <dbReference type="ChEBI" id="CHEBI:37565"/>
    </ligand>
</feature>
<feature type="binding site" evidence="1">
    <location>
        <position position="247"/>
    </location>
    <ligand>
        <name>K(+)</name>
        <dbReference type="ChEBI" id="CHEBI:29103"/>
    </ligand>
</feature>
<feature type="binding site" evidence="1">
    <location>
        <position position="249"/>
    </location>
    <ligand>
        <name>K(+)</name>
        <dbReference type="ChEBI" id="CHEBI:29103"/>
    </ligand>
</feature>
<feature type="binding site" evidence="1">
    <location>
        <position position="252"/>
    </location>
    <ligand>
        <name>K(+)</name>
        <dbReference type="ChEBI" id="CHEBI:29103"/>
    </ligand>
</feature>
<feature type="binding site" evidence="1">
    <location>
        <position position="253"/>
    </location>
    <ligand>
        <name>Mg(2+)</name>
        <dbReference type="ChEBI" id="CHEBI:18420"/>
    </ligand>
</feature>
<feature type="binding site" evidence="1">
    <location>
        <begin position="272"/>
        <end position="275"/>
    </location>
    <ligand>
        <name>GTP</name>
        <dbReference type="ChEBI" id="CHEBI:37565"/>
    </ligand>
</feature>
<feature type="binding site" evidence="1">
    <location>
        <position position="470"/>
    </location>
    <ligand>
        <name>(6S)-5-formyl-5,6,7,8-tetrahydrofolate</name>
        <dbReference type="ChEBI" id="CHEBI:57457"/>
    </ligand>
</feature>
<organism>
    <name type="scientific">Blochmanniella pennsylvanica (strain BPEN)</name>
    <dbReference type="NCBI Taxonomy" id="291272"/>
    <lineage>
        <taxon>Bacteria</taxon>
        <taxon>Pseudomonadati</taxon>
        <taxon>Pseudomonadota</taxon>
        <taxon>Gammaproteobacteria</taxon>
        <taxon>Enterobacterales</taxon>
        <taxon>Enterobacteriaceae</taxon>
        <taxon>ant endosymbionts</taxon>
        <taxon>Candidatus Blochmanniella</taxon>
    </lineage>
</organism>
<gene>
    <name evidence="1" type="primary">mnmE</name>
    <name evidence="1" type="synonym">trmE</name>
    <name type="ordered locus">BPEN_011</name>
</gene>
<protein>
    <recommendedName>
        <fullName evidence="1">tRNA modification GTPase MnmE</fullName>
        <ecNumber evidence="1">3.6.-.-</ecNumber>
    </recommendedName>
</protein>
<comment type="function">
    <text evidence="1">Exhibits a very high intrinsic GTPase hydrolysis rate. Involved in the addition of a carboxymethylaminomethyl (cmnm) group at the wobble position (U34) of certain tRNAs, forming tRNA-cmnm(5)s(2)U34.</text>
</comment>
<comment type="cofactor">
    <cofactor evidence="1">
        <name>K(+)</name>
        <dbReference type="ChEBI" id="CHEBI:29103"/>
    </cofactor>
    <text evidence="1">Binds 1 potassium ion per subunit.</text>
</comment>
<comment type="subunit">
    <text evidence="1">Homodimer. Heterotetramer of two MnmE and two MnmG subunits.</text>
</comment>
<comment type="subcellular location">
    <subcellularLocation>
        <location evidence="1">Cytoplasm</location>
    </subcellularLocation>
</comment>
<comment type="similarity">
    <text evidence="1">Belongs to the TRAFAC class TrmE-Era-EngA-EngB-Septin-like GTPase superfamily. TrmE GTPase family.</text>
</comment>